<proteinExistence type="inferred from homology"/>
<protein>
    <recommendedName>
        <fullName evidence="1">Mycothiol acetyltransferase</fullName>
        <shortName evidence="1">MSH acetyltransferase</shortName>
        <ecNumber evidence="1">2.3.1.189</ecNumber>
    </recommendedName>
    <alternativeName>
        <fullName evidence="1">Mycothiol synthase</fullName>
    </alternativeName>
</protein>
<name>MSHD_CLASE</name>
<feature type="chain" id="PRO_0000400246" description="Mycothiol acetyltransferase">
    <location>
        <begin position="1"/>
        <end position="304"/>
    </location>
</feature>
<feature type="domain" description="N-acetyltransferase 1" evidence="1">
    <location>
        <begin position="16"/>
        <end position="155"/>
    </location>
</feature>
<feature type="domain" description="N-acetyltransferase 2" evidence="1">
    <location>
        <begin position="164"/>
        <end position="304"/>
    </location>
</feature>
<feature type="binding site" evidence="1">
    <location>
        <position position="46"/>
    </location>
    <ligand>
        <name>1D-myo-inositol 2-(L-cysteinylamino)-2-deoxy-alpha-D-glucopyranoside</name>
        <dbReference type="ChEBI" id="CHEBI:58887"/>
    </ligand>
</feature>
<feature type="binding site" evidence="1">
    <location>
        <begin position="87"/>
        <end position="89"/>
    </location>
    <ligand>
        <name>acetyl-CoA</name>
        <dbReference type="ChEBI" id="CHEBI:57288"/>
        <label>1</label>
    </ligand>
</feature>
<feature type="binding site" evidence="1">
    <location>
        <position position="190"/>
    </location>
    <ligand>
        <name>1D-myo-inositol 2-(L-cysteinylamino)-2-deoxy-alpha-D-glucopyranoside</name>
        <dbReference type="ChEBI" id="CHEBI:58887"/>
    </ligand>
</feature>
<feature type="binding site" evidence="1">
    <location>
        <position position="230"/>
    </location>
    <ligand>
        <name>1D-myo-inositol 2-(L-cysteinylamino)-2-deoxy-alpha-D-glucopyranoside</name>
        <dbReference type="ChEBI" id="CHEBI:58887"/>
    </ligand>
</feature>
<feature type="binding site" evidence="1">
    <location>
        <position position="237"/>
    </location>
    <ligand>
        <name>1D-myo-inositol 2-(L-cysteinylamino)-2-deoxy-alpha-D-glucopyranoside</name>
        <dbReference type="ChEBI" id="CHEBI:58887"/>
    </ligand>
</feature>
<feature type="binding site" evidence="1">
    <location>
        <begin position="241"/>
        <end position="243"/>
    </location>
    <ligand>
        <name>acetyl-CoA</name>
        <dbReference type="ChEBI" id="CHEBI:57288"/>
        <label>2</label>
    </ligand>
</feature>
<feature type="binding site" evidence="1">
    <location>
        <begin position="248"/>
        <end position="254"/>
    </location>
    <ligand>
        <name>acetyl-CoA</name>
        <dbReference type="ChEBI" id="CHEBI:57288"/>
        <label>2</label>
    </ligand>
</feature>
<feature type="binding site" evidence="1">
    <location>
        <position position="275"/>
    </location>
    <ligand>
        <name>1D-myo-inositol 2-(L-cysteinylamino)-2-deoxy-alpha-D-glucopyranoside</name>
        <dbReference type="ChEBI" id="CHEBI:58887"/>
    </ligand>
</feature>
<organism>
    <name type="scientific">Clavibacter sepedonicus</name>
    <name type="common">Clavibacter michiganensis subsp. sepedonicus</name>
    <dbReference type="NCBI Taxonomy" id="31964"/>
    <lineage>
        <taxon>Bacteria</taxon>
        <taxon>Bacillati</taxon>
        <taxon>Actinomycetota</taxon>
        <taxon>Actinomycetes</taxon>
        <taxon>Micrococcales</taxon>
        <taxon>Microbacteriaceae</taxon>
        <taxon>Clavibacter</taxon>
    </lineage>
</organism>
<gene>
    <name evidence="1" type="primary">mshD</name>
    <name type="ordered locus">CMS2730</name>
</gene>
<evidence type="ECO:0000255" key="1">
    <source>
        <dbReference type="HAMAP-Rule" id="MF_01698"/>
    </source>
</evidence>
<accession>B0RAV5</accession>
<comment type="function">
    <text evidence="1">Catalyzes the transfer of acetyl from acetyl-CoA to desacetylmycothiol (Cys-GlcN-Ins) to form mycothiol.</text>
</comment>
<comment type="catalytic activity">
    <reaction evidence="1">
        <text>1D-myo-inositol 2-(L-cysteinylamino)-2-deoxy-alpha-D-glucopyranoside + acetyl-CoA = mycothiol + CoA + H(+)</text>
        <dbReference type="Rhea" id="RHEA:26172"/>
        <dbReference type="ChEBI" id="CHEBI:15378"/>
        <dbReference type="ChEBI" id="CHEBI:16768"/>
        <dbReference type="ChEBI" id="CHEBI:57287"/>
        <dbReference type="ChEBI" id="CHEBI:57288"/>
        <dbReference type="ChEBI" id="CHEBI:58887"/>
        <dbReference type="EC" id="2.3.1.189"/>
    </reaction>
</comment>
<comment type="subunit">
    <text evidence="1">Monomer.</text>
</comment>
<comment type="similarity">
    <text evidence="1">Belongs to the acetyltransferase family. MshD subfamily.</text>
</comment>
<sequence>MSAFPPPPEPDAPRVAHVEPAPDAVRGILALADRARADDGVAPFNEQTRLTLGADGGPTLLLAHGTDDDPLGAAVVAHGDAGIEAELVVDPAHRRRGVGRALLDAVLAEAAGSPVSVWAHGDHPAARALADATGLDRARELLQLRASVAEARTGLGERQMPAGVALSSFTADDADDWVALNARAFASHPEQGRMTRGDLDDRVAEAWFDPASLLLARDADGRLAGFHWLKVDGGQAEVYVLGVDPDRAARGLGSALLAAGLDLLAERGHDEVDLYVEADNTPALALYRRAAFRDAAVDVQYRRA</sequence>
<keyword id="KW-0012">Acyltransferase</keyword>
<keyword id="KW-0677">Repeat</keyword>
<keyword id="KW-0808">Transferase</keyword>
<reference key="1">
    <citation type="journal article" date="2008" name="J. Bacteriol.">
        <title>Genome of the actinomycete plant pathogen Clavibacter michiganensis subsp. sepedonicus suggests recent niche adaptation.</title>
        <authorList>
            <person name="Bentley S.D."/>
            <person name="Corton C."/>
            <person name="Brown S.E."/>
            <person name="Barron A."/>
            <person name="Clark L."/>
            <person name="Doggett J."/>
            <person name="Harris B."/>
            <person name="Ormond D."/>
            <person name="Quail M.A."/>
            <person name="May G."/>
            <person name="Francis D."/>
            <person name="Knudson D."/>
            <person name="Parkhill J."/>
            <person name="Ishimaru C.A."/>
        </authorList>
    </citation>
    <scope>NUCLEOTIDE SEQUENCE [LARGE SCALE GENOMIC DNA]</scope>
    <source>
        <strain>ATCC 33113 / DSM 20744 / JCM 9667 / LMG 2889 / ICMP 2535 / C-1</strain>
    </source>
</reference>
<dbReference type="EC" id="2.3.1.189" evidence="1"/>
<dbReference type="EMBL" id="AM849034">
    <property type="protein sequence ID" value="CAQ02802.1"/>
    <property type="molecule type" value="Genomic_DNA"/>
</dbReference>
<dbReference type="RefSeq" id="WP_012299971.1">
    <property type="nucleotide sequence ID" value="NZ_MZMN01000003.1"/>
</dbReference>
<dbReference type="SMR" id="B0RAV5"/>
<dbReference type="STRING" id="31964.CMS2730"/>
<dbReference type="KEGG" id="cms:CMS2730"/>
<dbReference type="eggNOG" id="COG0454">
    <property type="taxonomic scope" value="Bacteria"/>
</dbReference>
<dbReference type="eggNOG" id="COG0456">
    <property type="taxonomic scope" value="Bacteria"/>
</dbReference>
<dbReference type="HOGENOM" id="CLU_068014_0_0_11"/>
<dbReference type="OrthoDB" id="3208058at2"/>
<dbReference type="Proteomes" id="UP000001318">
    <property type="component" value="Chromosome"/>
</dbReference>
<dbReference type="GO" id="GO:0035447">
    <property type="term" value="F:mycothiol synthase activity"/>
    <property type="evidence" value="ECO:0007669"/>
    <property type="project" value="UniProtKB-UniRule"/>
</dbReference>
<dbReference type="GO" id="GO:0008999">
    <property type="term" value="F:protein-N-terminal-alanine acetyltransferase activity"/>
    <property type="evidence" value="ECO:0007669"/>
    <property type="project" value="TreeGrafter"/>
</dbReference>
<dbReference type="GO" id="GO:0010125">
    <property type="term" value="P:mycothiol biosynthetic process"/>
    <property type="evidence" value="ECO:0007669"/>
    <property type="project" value="UniProtKB-UniRule"/>
</dbReference>
<dbReference type="CDD" id="cd04301">
    <property type="entry name" value="NAT_SF"/>
    <property type="match status" value="1"/>
</dbReference>
<dbReference type="Gene3D" id="3.40.630.30">
    <property type="match status" value="1"/>
</dbReference>
<dbReference type="HAMAP" id="MF_01698">
    <property type="entry name" value="MshD"/>
    <property type="match status" value="1"/>
</dbReference>
<dbReference type="InterPro" id="IPR016181">
    <property type="entry name" value="Acyl_CoA_acyltransferase"/>
</dbReference>
<dbReference type="InterPro" id="IPR000182">
    <property type="entry name" value="GNAT_dom"/>
</dbReference>
<dbReference type="InterPro" id="IPR050276">
    <property type="entry name" value="MshD_Acetyltransferase"/>
</dbReference>
<dbReference type="InterPro" id="IPR017813">
    <property type="entry name" value="Mycothiol_AcTrfase"/>
</dbReference>
<dbReference type="NCBIfam" id="TIGR03448">
    <property type="entry name" value="mycothiol_MshD"/>
    <property type="match status" value="1"/>
</dbReference>
<dbReference type="PANTHER" id="PTHR43617">
    <property type="entry name" value="L-AMINO ACID N-ACETYLTRANSFERASE"/>
    <property type="match status" value="1"/>
</dbReference>
<dbReference type="PANTHER" id="PTHR43617:SF31">
    <property type="entry name" value="MYCOTHIOL ACETYLTRANSFERASE"/>
    <property type="match status" value="1"/>
</dbReference>
<dbReference type="Pfam" id="PF00583">
    <property type="entry name" value="Acetyltransf_1"/>
    <property type="match status" value="2"/>
</dbReference>
<dbReference type="PIRSF" id="PIRSF021524">
    <property type="entry name" value="MSH_acetyltransferase"/>
    <property type="match status" value="1"/>
</dbReference>
<dbReference type="SUPFAM" id="SSF55729">
    <property type="entry name" value="Acyl-CoA N-acyltransferases (Nat)"/>
    <property type="match status" value="2"/>
</dbReference>
<dbReference type="PROSITE" id="PS51186">
    <property type="entry name" value="GNAT"/>
    <property type="match status" value="2"/>
</dbReference>